<reference key="1">
    <citation type="journal article" date="1991" name="J. Bacteriol.">
        <title>Cotranscription of the electron transport protein genes nifJ and nifF in Enterobacter agglomerans 333.</title>
        <authorList>
            <person name="Kreutzer R."/>
            <person name="Dayananda S."/>
            <person name="Klingmueller W."/>
        </authorList>
    </citation>
    <scope>NUCLEOTIDE SEQUENCE [GENOMIC DNA]</scope>
    <source>
        <strain>333</strain>
    </source>
</reference>
<accession>P28580</accession>
<geneLocation type="plasmid">
    <name>pEA3</name>
</geneLocation>
<gene>
    <name type="primary">nifQ</name>
</gene>
<evidence type="ECO:0000305" key="1"/>
<keyword id="KW-0500">Molybdenum</keyword>
<keyword id="KW-0535">Nitrogen fixation</keyword>
<keyword id="KW-0614">Plasmid</keyword>
<name>NIFQ_ENTAG</name>
<proteinExistence type="inferred from homology"/>
<protein>
    <recommendedName>
        <fullName>Protein NifQ</fullName>
    </recommendedName>
</protein>
<feature type="chain" id="PRO_0000096821" description="Protein NifQ">
    <location>
        <begin position="1" status="less than"/>
        <end position="26"/>
    </location>
</feature>
<feature type="non-terminal residue">
    <location>
        <position position="1"/>
    </location>
</feature>
<sequence>RWAEIVCRSPSCNECCEWHTCFAPED</sequence>
<organism>
    <name type="scientific">Enterobacter agglomerans</name>
    <name type="common">Erwinia herbicola</name>
    <name type="synonym">Pantoea agglomerans</name>
    <dbReference type="NCBI Taxonomy" id="549"/>
    <lineage>
        <taxon>Bacteria</taxon>
        <taxon>Pseudomonadati</taxon>
        <taxon>Pseudomonadota</taxon>
        <taxon>Gammaproteobacteria</taxon>
        <taxon>Enterobacterales</taxon>
        <taxon>Erwiniaceae</taxon>
        <taxon>Pantoea</taxon>
        <taxon>Pantoea agglomerans group</taxon>
    </lineage>
</organism>
<dbReference type="EMBL" id="M38221">
    <property type="protein sequence ID" value="AAA23384.1"/>
    <property type="molecule type" value="Genomic_DNA"/>
</dbReference>
<dbReference type="PIR" id="C39414">
    <property type="entry name" value="C39414"/>
</dbReference>
<dbReference type="GO" id="GO:0009399">
    <property type="term" value="P:nitrogen fixation"/>
    <property type="evidence" value="ECO:0007669"/>
    <property type="project" value="UniProtKB-KW"/>
</dbReference>
<comment type="function">
    <text>Probably involved in molybdenum processing.</text>
</comment>
<comment type="similarity">
    <text evidence="1">Belongs to the NifQ family.</text>
</comment>